<dbReference type="EMBL" id="AC006951">
    <property type="protein sequence ID" value="AAD25839.1"/>
    <property type="molecule type" value="Genomic_DNA"/>
</dbReference>
<dbReference type="EMBL" id="CP002685">
    <property type="protein sequence ID" value="AEC05829.1"/>
    <property type="molecule type" value="Genomic_DNA"/>
</dbReference>
<dbReference type="EMBL" id="AF419568">
    <property type="protein sequence ID" value="AAL31900.1"/>
    <property type="molecule type" value="mRNA"/>
</dbReference>
<dbReference type="EMBL" id="AY079105">
    <property type="protein sequence ID" value="AAL84989.1"/>
    <property type="molecule type" value="mRNA"/>
</dbReference>
<dbReference type="EMBL" id="AY088578">
    <property type="protein sequence ID" value="AAM66109.1"/>
    <property type="molecule type" value="mRNA"/>
</dbReference>
<dbReference type="EMBL" id="Z35178">
    <property type="protein sequence ID" value="CAA84533.1"/>
    <property type="molecule type" value="mRNA"/>
</dbReference>
<dbReference type="PIR" id="A84457">
    <property type="entry name" value="A84457"/>
</dbReference>
<dbReference type="RefSeq" id="NP_178520.1">
    <property type="nucleotide sequence ID" value="NM_126472.4"/>
</dbReference>
<dbReference type="SMR" id="P49205"/>
<dbReference type="BioGRID" id="379">
    <property type="interactions" value="50"/>
</dbReference>
<dbReference type="FunCoup" id="P49205">
    <property type="interactions" value="3135"/>
</dbReference>
<dbReference type="IntAct" id="P49205">
    <property type="interactions" value="3"/>
</dbReference>
<dbReference type="STRING" id="3702.P49205"/>
<dbReference type="iPTMnet" id="P49205"/>
<dbReference type="PaxDb" id="3702-AT2G04390.1"/>
<dbReference type="ProteomicsDB" id="226722"/>
<dbReference type="EnsemblPlants" id="AT2G04390.1">
    <property type="protein sequence ID" value="AT2G04390.1"/>
    <property type="gene ID" value="AT2G04390"/>
</dbReference>
<dbReference type="GeneID" id="814978"/>
<dbReference type="Gramene" id="AT2G04390.1">
    <property type="protein sequence ID" value="AT2G04390.1"/>
    <property type="gene ID" value="AT2G04390"/>
</dbReference>
<dbReference type="KEGG" id="ath:AT2G04390"/>
<dbReference type="Araport" id="AT2G04390"/>
<dbReference type="TAIR" id="AT2G04390">
    <property type="gene designation" value="DS17"/>
</dbReference>
<dbReference type="eggNOG" id="KOG0187">
    <property type="taxonomic scope" value="Eukaryota"/>
</dbReference>
<dbReference type="HOGENOM" id="CLU_112958_2_0_1"/>
<dbReference type="InParanoid" id="P49205"/>
<dbReference type="OMA" id="DSHANKC"/>
<dbReference type="OrthoDB" id="1727351at2759"/>
<dbReference type="PhylomeDB" id="P49205"/>
<dbReference type="CD-CODE" id="4299E36E">
    <property type="entry name" value="Nucleolus"/>
</dbReference>
<dbReference type="PRO" id="PR:P49205"/>
<dbReference type="Proteomes" id="UP000006548">
    <property type="component" value="Chromosome 2"/>
</dbReference>
<dbReference type="ExpressionAtlas" id="P49205">
    <property type="expression patterns" value="baseline and differential"/>
</dbReference>
<dbReference type="GO" id="GO:0022627">
    <property type="term" value="C:cytosolic small ribosomal subunit"/>
    <property type="evidence" value="ECO:0007005"/>
    <property type="project" value="TAIR"/>
</dbReference>
<dbReference type="GO" id="GO:0005739">
    <property type="term" value="C:mitochondrion"/>
    <property type="evidence" value="ECO:0007005"/>
    <property type="project" value="TAIR"/>
</dbReference>
<dbReference type="GO" id="GO:0005730">
    <property type="term" value="C:nucleolus"/>
    <property type="evidence" value="ECO:0007005"/>
    <property type="project" value="TAIR"/>
</dbReference>
<dbReference type="GO" id="GO:0003729">
    <property type="term" value="F:mRNA binding"/>
    <property type="evidence" value="ECO:0000314"/>
    <property type="project" value="TAIR"/>
</dbReference>
<dbReference type="GO" id="GO:0003735">
    <property type="term" value="F:structural constituent of ribosome"/>
    <property type="evidence" value="ECO:0000314"/>
    <property type="project" value="CAFA"/>
</dbReference>
<dbReference type="GO" id="GO:0006412">
    <property type="term" value="P:translation"/>
    <property type="evidence" value="ECO:0007669"/>
    <property type="project" value="InterPro"/>
</dbReference>
<dbReference type="FunFam" id="1.10.60.20:FF:000001">
    <property type="entry name" value="40S ribosomal protein S17"/>
    <property type="match status" value="1"/>
</dbReference>
<dbReference type="Gene3D" id="1.10.60.20">
    <property type="entry name" value="Ribosomal protein S17e-like"/>
    <property type="match status" value="1"/>
</dbReference>
<dbReference type="HAMAP" id="MF_00511">
    <property type="entry name" value="Ribosomal_eS17"/>
    <property type="match status" value="1"/>
</dbReference>
<dbReference type="InterPro" id="IPR001210">
    <property type="entry name" value="Ribosomal_eS17"/>
</dbReference>
<dbReference type="InterPro" id="IPR018273">
    <property type="entry name" value="Ribosomal_eS17_CS"/>
</dbReference>
<dbReference type="InterPro" id="IPR036401">
    <property type="entry name" value="Ribosomal_eS17_sf"/>
</dbReference>
<dbReference type="PANTHER" id="PTHR10732">
    <property type="entry name" value="40S RIBOSOMAL PROTEIN S17"/>
    <property type="match status" value="1"/>
</dbReference>
<dbReference type="PANTHER" id="PTHR10732:SF7">
    <property type="entry name" value="SMALL RIBOSOMAL SUBUNIT PROTEIN ES17X-RELATED"/>
    <property type="match status" value="1"/>
</dbReference>
<dbReference type="Pfam" id="PF00833">
    <property type="entry name" value="Ribosomal_S17e"/>
    <property type="match status" value="1"/>
</dbReference>
<dbReference type="SUPFAM" id="SSF116820">
    <property type="entry name" value="Rps17e-like"/>
    <property type="match status" value="1"/>
</dbReference>
<dbReference type="PROSITE" id="PS00712">
    <property type="entry name" value="RIBOSOMAL_S17E"/>
    <property type="match status" value="1"/>
</dbReference>
<comment type="similarity">
    <text evidence="2">Belongs to the eukaryotic ribosomal protein eS17 family.</text>
</comment>
<accession>P49205</accession>
<accession>Q9SJD0</accession>
<organism>
    <name type="scientific">Arabidopsis thaliana</name>
    <name type="common">Mouse-ear cress</name>
    <dbReference type="NCBI Taxonomy" id="3702"/>
    <lineage>
        <taxon>Eukaryota</taxon>
        <taxon>Viridiplantae</taxon>
        <taxon>Streptophyta</taxon>
        <taxon>Embryophyta</taxon>
        <taxon>Tracheophyta</taxon>
        <taxon>Spermatophyta</taxon>
        <taxon>Magnoliopsida</taxon>
        <taxon>eudicotyledons</taxon>
        <taxon>Gunneridae</taxon>
        <taxon>Pentapetalae</taxon>
        <taxon>rosids</taxon>
        <taxon>malvids</taxon>
        <taxon>Brassicales</taxon>
        <taxon>Brassicaceae</taxon>
        <taxon>Camelineae</taxon>
        <taxon>Arabidopsis</taxon>
    </lineage>
</organism>
<gene>
    <name type="primary">RPS17A</name>
    <name type="synonym">RPS17</name>
    <name type="ordered locus">At2g04390</name>
    <name type="ORF">T1O3.20</name>
</gene>
<proteinExistence type="evidence at transcript level"/>
<protein>
    <recommendedName>
        <fullName evidence="1">Small ribosomal subunit protein eS17z</fullName>
    </recommendedName>
    <alternativeName>
        <fullName>40S ribosomal protein S17-1</fullName>
    </alternativeName>
</protein>
<keyword id="KW-1185">Reference proteome</keyword>
<keyword id="KW-0687">Ribonucleoprotein</keyword>
<keyword id="KW-0689">Ribosomal protein</keyword>
<reference key="1">
    <citation type="journal article" date="1999" name="Nature">
        <title>Sequence and analysis of chromosome 2 of the plant Arabidopsis thaliana.</title>
        <authorList>
            <person name="Lin X."/>
            <person name="Kaul S."/>
            <person name="Rounsley S.D."/>
            <person name="Shea T.P."/>
            <person name="Benito M.-I."/>
            <person name="Town C.D."/>
            <person name="Fujii C.Y."/>
            <person name="Mason T.M."/>
            <person name="Bowman C.L."/>
            <person name="Barnstead M.E."/>
            <person name="Feldblyum T.V."/>
            <person name="Buell C.R."/>
            <person name="Ketchum K.A."/>
            <person name="Lee J.J."/>
            <person name="Ronning C.M."/>
            <person name="Koo H.L."/>
            <person name="Moffat K.S."/>
            <person name="Cronin L.A."/>
            <person name="Shen M."/>
            <person name="Pai G."/>
            <person name="Van Aken S."/>
            <person name="Umayam L."/>
            <person name="Tallon L.J."/>
            <person name="Gill J.E."/>
            <person name="Adams M.D."/>
            <person name="Carrera A.J."/>
            <person name="Creasy T.H."/>
            <person name="Goodman H.M."/>
            <person name="Somerville C.R."/>
            <person name="Copenhaver G.P."/>
            <person name="Preuss D."/>
            <person name="Nierman W.C."/>
            <person name="White O."/>
            <person name="Eisen J.A."/>
            <person name="Salzberg S.L."/>
            <person name="Fraser C.M."/>
            <person name="Venter J.C."/>
        </authorList>
    </citation>
    <scope>NUCLEOTIDE SEQUENCE [LARGE SCALE GENOMIC DNA]</scope>
    <source>
        <strain>cv. Columbia</strain>
    </source>
</reference>
<reference key="2">
    <citation type="journal article" date="2017" name="Plant J.">
        <title>Araport11: a complete reannotation of the Arabidopsis thaliana reference genome.</title>
        <authorList>
            <person name="Cheng C.Y."/>
            <person name="Krishnakumar V."/>
            <person name="Chan A.P."/>
            <person name="Thibaud-Nissen F."/>
            <person name="Schobel S."/>
            <person name="Town C.D."/>
        </authorList>
    </citation>
    <scope>GENOME REANNOTATION</scope>
    <source>
        <strain>cv. Columbia</strain>
    </source>
</reference>
<reference key="3">
    <citation type="journal article" date="2003" name="Science">
        <title>Empirical analysis of transcriptional activity in the Arabidopsis genome.</title>
        <authorList>
            <person name="Yamada K."/>
            <person name="Lim J."/>
            <person name="Dale J.M."/>
            <person name="Chen H."/>
            <person name="Shinn P."/>
            <person name="Palm C.J."/>
            <person name="Southwick A.M."/>
            <person name="Wu H.C."/>
            <person name="Kim C.J."/>
            <person name="Nguyen M."/>
            <person name="Pham P.K."/>
            <person name="Cheuk R.F."/>
            <person name="Karlin-Newmann G."/>
            <person name="Liu S.X."/>
            <person name="Lam B."/>
            <person name="Sakano H."/>
            <person name="Wu T."/>
            <person name="Yu G."/>
            <person name="Miranda M."/>
            <person name="Quach H.L."/>
            <person name="Tripp M."/>
            <person name="Chang C.H."/>
            <person name="Lee J.M."/>
            <person name="Toriumi M.J."/>
            <person name="Chan M.M."/>
            <person name="Tang C.C."/>
            <person name="Onodera C.S."/>
            <person name="Deng J.M."/>
            <person name="Akiyama K."/>
            <person name="Ansari Y."/>
            <person name="Arakawa T."/>
            <person name="Banh J."/>
            <person name="Banno F."/>
            <person name="Bowser L."/>
            <person name="Brooks S.Y."/>
            <person name="Carninci P."/>
            <person name="Chao Q."/>
            <person name="Choy N."/>
            <person name="Enju A."/>
            <person name="Goldsmith A.D."/>
            <person name="Gurjal M."/>
            <person name="Hansen N.F."/>
            <person name="Hayashizaki Y."/>
            <person name="Johnson-Hopson C."/>
            <person name="Hsuan V.W."/>
            <person name="Iida K."/>
            <person name="Karnes M."/>
            <person name="Khan S."/>
            <person name="Koesema E."/>
            <person name="Ishida J."/>
            <person name="Jiang P.X."/>
            <person name="Jones T."/>
            <person name="Kawai J."/>
            <person name="Kamiya A."/>
            <person name="Meyers C."/>
            <person name="Nakajima M."/>
            <person name="Narusaka M."/>
            <person name="Seki M."/>
            <person name="Sakurai T."/>
            <person name="Satou M."/>
            <person name="Tamse R."/>
            <person name="Vaysberg M."/>
            <person name="Wallender E.K."/>
            <person name="Wong C."/>
            <person name="Yamamura Y."/>
            <person name="Yuan S."/>
            <person name="Shinozaki K."/>
            <person name="Davis R.W."/>
            <person name="Theologis A."/>
            <person name="Ecker J.R."/>
        </authorList>
    </citation>
    <scope>NUCLEOTIDE SEQUENCE [LARGE SCALE MRNA]</scope>
    <source>
        <strain>cv. Columbia</strain>
    </source>
</reference>
<reference key="4">
    <citation type="submission" date="2002-03" db="EMBL/GenBank/DDBJ databases">
        <title>Full-length cDNA from Arabidopsis thaliana.</title>
        <authorList>
            <person name="Brover V.V."/>
            <person name="Troukhan M.E."/>
            <person name="Alexandrov N.A."/>
            <person name="Lu Y.-P."/>
            <person name="Flavell R.B."/>
            <person name="Feldmann K.A."/>
        </authorList>
    </citation>
    <scope>NUCLEOTIDE SEQUENCE [LARGE SCALE MRNA]</scope>
</reference>
<reference key="5">
    <citation type="journal article" date="1996" name="Plant J.">
        <title>Further progress towards a catalogue of all Arabidopsis genes: analysis of a set of 5000 non-redundant ESTs.</title>
        <authorList>
            <person name="Cooke R."/>
            <person name="Raynal M."/>
            <person name="Laudie M."/>
            <person name="Grellet F."/>
            <person name="Delseny M."/>
            <person name="Morris P.-C."/>
            <person name="Guerrier D."/>
            <person name="Giraudat J."/>
            <person name="Quigley F."/>
            <person name="Clabault G."/>
            <person name="Li Y.-F."/>
            <person name="Mache R."/>
            <person name="Krivitzky M."/>
            <person name="Gy I.J.-J."/>
            <person name="Kreis M."/>
            <person name="Lecharny A."/>
            <person name="Parmentier Y."/>
            <person name="Marbach J."/>
            <person name="Fleck J."/>
            <person name="Clement B."/>
            <person name="Philipps G."/>
            <person name="Herve C."/>
            <person name="Bardet C."/>
            <person name="Tremousaygue D."/>
            <person name="Lescure B."/>
            <person name="Lacomme C."/>
            <person name="Roby D."/>
            <person name="Jourjon M.-F."/>
            <person name="Chabrier P."/>
            <person name="Charpenteau J.-L."/>
            <person name="Desprez T."/>
            <person name="Amselem J."/>
            <person name="Chiapello H."/>
            <person name="Hoefte H."/>
        </authorList>
    </citation>
    <scope>NUCLEOTIDE SEQUENCE [LARGE SCALE MRNA] OF 1-80</scope>
    <source>
        <strain>cv. Columbia</strain>
    </source>
</reference>
<reference key="6">
    <citation type="journal article" date="2001" name="Plant Physiol.">
        <title>The organization of cytoplasmic ribosomal protein genes in the Arabidopsis genome.</title>
        <authorList>
            <person name="Barakat A."/>
            <person name="Szick-Miranda K."/>
            <person name="Chang I.-F."/>
            <person name="Guyot R."/>
            <person name="Blanc G."/>
            <person name="Cooke R."/>
            <person name="Delseny M."/>
            <person name="Bailey-Serres J."/>
        </authorList>
    </citation>
    <scope>GENE FAMILY ORGANIZATION</scope>
    <scope>NOMENCLATURE</scope>
</reference>
<reference key="7">
    <citation type="journal article" date="2023" name="Plant Cell">
        <title>An updated nomenclature for plant ribosomal protein genes.</title>
        <authorList>
            <person name="Scarpin M.R."/>
            <person name="Busche M."/>
            <person name="Martinez R.E."/>
            <person name="Harper L.C."/>
            <person name="Reiser L."/>
            <person name="Szakonyi D."/>
            <person name="Merchante C."/>
            <person name="Lan T."/>
            <person name="Xiong W."/>
            <person name="Mo B."/>
            <person name="Tang G."/>
            <person name="Chen X."/>
            <person name="Bailey-Serres J."/>
            <person name="Browning K.S."/>
            <person name="Brunkard J.O."/>
        </authorList>
    </citation>
    <scope>NOMENCLATURE</scope>
</reference>
<sequence>MGRVRTKTVKKSSRQVIEKYYSRMTLDFHTNKKILEEVAIIPSKRLRNKIAGFSTHLMKRIQKGPVRGISLKLQEEERERRMDFVPDESAIKTDEIKVDKETLEMLASLGMSDTLGISAVDPQQAMAPIPAFGGGRAPRRY</sequence>
<evidence type="ECO:0000303" key="1">
    <source>
    </source>
</evidence>
<evidence type="ECO:0000305" key="2"/>
<feature type="chain" id="PRO_0000141538" description="Small ribosomal subunit protein eS17z">
    <location>
        <begin position="1"/>
        <end position="141"/>
    </location>
</feature>
<name>RS171_ARATH</name>